<reference key="1">
    <citation type="journal article" date="1995" name="Nature">
        <title>Mutations in the palmitoyl protein thioesterase gene causing infantile neuronal ceroid lipofuscinosis.</title>
        <authorList>
            <person name="Vesa J."/>
            <person name="Hellsten E."/>
            <person name="Verkruyse L.A."/>
            <person name="Camp L.A."/>
            <person name="Rapola J."/>
            <person name="Santavuori P."/>
            <person name="Hofmann S.L."/>
            <person name="Peltonen L."/>
        </authorList>
    </citation>
    <scope>NUCLEOTIDE SEQUENCE [GENOMIC DNA / MRNA] (ISOFORM 1)</scope>
    <scope>VARIANT CLN1 TRP-122</scope>
    <source>
        <tissue>Brain</tissue>
    </source>
</reference>
<reference key="2">
    <citation type="journal article" date="1996" name="Proc. Natl. Acad. Sci. U.S.A.">
        <title>Didemnin binds to the protein palmitoyl thioesterase responsible for infantile neuronal ceroid lipofuscinosis.</title>
        <authorList>
            <person name="Crews C.M."/>
            <person name="Lane W.S."/>
            <person name="Schreiber S.L."/>
        </authorList>
    </citation>
    <scope>NUCLEOTIDE SEQUENCE [MRNA] (ISOFORM 1)</scope>
</reference>
<reference key="3">
    <citation type="journal article" date="1996" name="Genomics">
        <title>cDNA and genomic cloning of human palmitoyl-protein thioesterase (PPT), the enzyme defective in infantile neuronal ceroid lipofuscinosis.</title>
        <authorList>
            <person name="Schriner J.E."/>
            <person name="Yi W."/>
            <person name="Hofmann S.L."/>
        </authorList>
    </citation>
    <scope>NUCLEOTIDE SEQUENCE [GENOMIC DNA]</scope>
</reference>
<reference key="4">
    <citation type="journal article" date="2004" name="Nat. Genet.">
        <title>Complete sequencing and characterization of 21,243 full-length human cDNAs.</title>
        <authorList>
            <person name="Ota T."/>
            <person name="Suzuki Y."/>
            <person name="Nishikawa T."/>
            <person name="Otsuki T."/>
            <person name="Sugiyama T."/>
            <person name="Irie R."/>
            <person name="Wakamatsu A."/>
            <person name="Hayashi K."/>
            <person name="Sato H."/>
            <person name="Nagai K."/>
            <person name="Kimura K."/>
            <person name="Makita H."/>
            <person name="Sekine M."/>
            <person name="Obayashi M."/>
            <person name="Nishi T."/>
            <person name="Shibahara T."/>
            <person name="Tanaka T."/>
            <person name="Ishii S."/>
            <person name="Yamamoto J."/>
            <person name="Saito K."/>
            <person name="Kawai Y."/>
            <person name="Isono Y."/>
            <person name="Nakamura Y."/>
            <person name="Nagahari K."/>
            <person name="Murakami K."/>
            <person name="Yasuda T."/>
            <person name="Iwayanagi T."/>
            <person name="Wagatsuma M."/>
            <person name="Shiratori A."/>
            <person name="Sudo H."/>
            <person name="Hosoiri T."/>
            <person name="Kaku Y."/>
            <person name="Kodaira H."/>
            <person name="Kondo H."/>
            <person name="Sugawara M."/>
            <person name="Takahashi M."/>
            <person name="Kanda K."/>
            <person name="Yokoi T."/>
            <person name="Furuya T."/>
            <person name="Kikkawa E."/>
            <person name="Omura Y."/>
            <person name="Abe K."/>
            <person name="Kamihara K."/>
            <person name="Katsuta N."/>
            <person name="Sato K."/>
            <person name="Tanikawa M."/>
            <person name="Yamazaki M."/>
            <person name="Ninomiya K."/>
            <person name="Ishibashi T."/>
            <person name="Yamashita H."/>
            <person name="Murakawa K."/>
            <person name="Fujimori K."/>
            <person name="Tanai H."/>
            <person name="Kimata M."/>
            <person name="Watanabe M."/>
            <person name="Hiraoka S."/>
            <person name="Chiba Y."/>
            <person name="Ishida S."/>
            <person name="Ono Y."/>
            <person name="Takiguchi S."/>
            <person name="Watanabe S."/>
            <person name="Yosida M."/>
            <person name="Hotuta T."/>
            <person name="Kusano J."/>
            <person name="Kanehori K."/>
            <person name="Takahashi-Fujii A."/>
            <person name="Hara H."/>
            <person name="Tanase T.-O."/>
            <person name="Nomura Y."/>
            <person name="Togiya S."/>
            <person name="Komai F."/>
            <person name="Hara R."/>
            <person name="Takeuchi K."/>
            <person name="Arita M."/>
            <person name="Imose N."/>
            <person name="Musashino K."/>
            <person name="Yuuki H."/>
            <person name="Oshima A."/>
            <person name="Sasaki N."/>
            <person name="Aotsuka S."/>
            <person name="Yoshikawa Y."/>
            <person name="Matsunawa H."/>
            <person name="Ichihara T."/>
            <person name="Shiohata N."/>
            <person name="Sano S."/>
            <person name="Moriya S."/>
            <person name="Momiyama H."/>
            <person name="Satoh N."/>
            <person name="Takami S."/>
            <person name="Terashima Y."/>
            <person name="Suzuki O."/>
            <person name="Nakagawa S."/>
            <person name="Senoh A."/>
            <person name="Mizoguchi H."/>
            <person name="Goto Y."/>
            <person name="Shimizu F."/>
            <person name="Wakebe H."/>
            <person name="Hishigaki H."/>
            <person name="Watanabe T."/>
            <person name="Sugiyama A."/>
            <person name="Takemoto M."/>
            <person name="Kawakami B."/>
            <person name="Yamazaki M."/>
            <person name="Watanabe K."/>
            <person name="Kumagai A."/>
            <person name="Itakura S."/>
            <person name="Fukuzumi Y."/>
            <person name="Fujimori Y."/>
            <person name="Komiyama M."/>
            <person name="Tashiro H."/>
            <person name="Tanigami A."/>
            <person name="Fujiwara T."/>
            <person name="Ono T."/>
            <person name="Yamada K."/>
            <person name="Fujii Y."/>
            <person name="Ozaki K."/>
            <person name="Hirao M."/>
            <person name="Ohmori Y."/>
            <person name="Kawabata A."/>
            <person name="Hikiji T."/>
            <person name="Kobatake N."/>
            <person name="Inagaki H."/>
            <person name="Ikema Y."/>
            <person name="Okamoto S."/>
            <person name="Okitani R."/>
            <person name="Kawakami T."/>
            <person name="Noguchi S."/>
            <person name="Itoh T."/>
            <person name="Shigeta K."/>
            <person name="Senba T."/>
            <person name="Matsumura K."/>
            <person name="Nakajima Y."/>
            <person name="Mizuno T."/>
            <person name="Morinaga M."/>
            <person name="Sasaki M."/>
            <person name="Togashi T."/>
            <person name="Oyama M."/>
            <person name="Hata H."/>
            <person name="Watanabe M."/>
            <person name="Komatsu T."/>
            <person name="Mizushima-Sugano J."/>
            <person name="Satoh T."/>
            <person name="Shirai Y."/>
            <person name="Takahashi Y."/>
            <person name="Nakagawa K."/>
            <person name="Okumura K."/>
            <person name="Nagase T."/>
            <person name="Nomura N."/>
            <person name="Kikuchi H."/>
            <person name="Masuho Y."/>
            <person name="Yamashita R."/>
            <person name="Nakai K."/>
            <person name="Yada T."/>
            <person name="Nakamura Y."/>
            <person name="Ohara O."/>
            <person name="Isogai T."/>
            <person name="Sugano S."/>
        </authorList>
    </citation>
    <scope>NUCLEOTIDE SEQUENCE [LARGE SCALE MRNA] (ISOFORMS 1 AND 2)</scope>
    <source>
        <tissue>Cerebellum</tissue>
        <tissue>Testis</tissue>
    </source>
</reference>
<reference key="5">
    <citation type="submission" date="2004-06" db="EMBL/GenBank/DDBJ databases">
        <title>Cloning of human full open reading frames in Gateway(TM) system entry vector (pDONR201).</title>
        <authorList>
            <person name="Ebert L."/>
            <person name="Schick M."/>
            <person name="Neubert P."/>
            <person name="Schatten R."/>
            <person name="Henze S."/>
            <person name="Korn B."/>
        </authorList>
    </citation>
    <scope>NUCLEOTIDE SEQUENCE [LARGE SCALE MRNA] (ISOFORM 1)</scope>
</reference>
<reference key="6">
    <citation type="journal article" date="2006" name="Nature">
        <title>The DNA sequence and biological annotation of human chromosome 1.</title>
        <authorList>
            <person name="Gregory S.G."/>
            <person name="Barlow K.F."/>
            <person name="McLay K.E."/>
            <person name="Kaul R."/>
            <person name="Swarbreck D."/>
            <person name="Dunham A."/>
            <person name="Scott C.E."/>
            <person name="Howe K.L."/>
            <person name="Woodfine K."/>
            <person name="Spencer C.C.A."/>
            <person name="Jones M.C."/>
            <person name="Gillson C."/>
            <person name="Searle S."/>
            <person name="Zhou Y."/>
            <person name="Kokocinski F."/>
            <person name="McDonald L."/>
            <person name="Evans R."/>
            <person name="Phillips K."/>
            <person name="Atkinson A."/>
            <person name="Cooper R."/>
            <person name="Jones C."/>
            <person name="Hall R.E."/>
            <person name="Andrews T.D."/>
            <person name="Lloyd C."/>
            <person name="Ainscough R."/>
            <person name="Almeida J.P."/>
            <person name="Ambrose K.D."/>
            <person name="Anderson F."/>
            <person name="Andrew R.W."/>
            <person name="Ashwell R.I.S."/>
            <person name="Aubin K."/>
            <person name="Babbage A.K."/>
            <person name="Bagguley C.L."/>
            <person name="Bailey J."/>
            <person name="Beasley H."/>
            <person name="Bethel G."/>
            <person name="Bird C.P."/>
            <person name="Bray-Allen S."/>
            <person name="Brown J.Y."/>
            <person name="Brown A.J."/>
            <person name="Buckley D."/>
            <person name="Burton J."/>
            <person name="Bye J."/>
            <person name="Carder C."/>
            <person name="Chapman J.C."/>
            <person name="Clark S.Y."/>
            <person name="Clarke G."/>
            <person name="Clee C."/>
            <person name="Cobley V."/>
            <person name="Collier R.E."/>
            <person name="Corby N."/>
            <person name="Coville G.J."/>
            <person name="Davies J."/>
            <person name="Deadman R."/>
            <person name="Dunn M."/>
            <person name="Earthrowl M."/>
            <person name="Ellington A.G."/>
            <person name="Errington H."/>
            <person name="Frankish A."/>
            <person name="Frankland J."/>
            <person name="French L."/>
            <person name="Garner P."/>
            <person name="Garnett J."/>
            <person name="Gay L."/>
            <person name="Ghori M.R.J."/>
            <person name="Gibson R."/>
            <person name="Gilby L.M."/>
            <person name="Gillett W."/>
            <person name="Glithero R.J."/>
            <person name="Grafham D.V."/>
            <person name="Griffiths C."/>
            <person name="Griffiths-Jones S."/>
            <person name="Grocock R."/>
            <person name="Hammond S."/>
            <person name="Harrison E.S.I."/>
            <person name="Hart E."/>
            <person name="Haugen E."/>
            <person name="Heath P.D."/>
            <person name="Holmes S."/>
            <person name="Holt K."/>
            <person name="Howden P.J."/>
            <person name="Hunt A.R."/>
            <person name="Hunt S.E."/>
            <person name="Hunter G."/>
            <person name="Isherwood J."/>
            <person name="James R."/>
            <person name="Johnson C."/>
            <person name="Johnson D."/>
            <person name="Joy A."/>
            <person name="Kay M."/>
            <person name="Kershaw J.K."/>
            <person name="Kibukawa M."/>
            <person name="Kimberley A.M."/>
            <person name="King A."/>
            <person name="Knights A.J."/>
            <person name="Lad H."/>
            <person name="Laird G."/>
            <person name="Lawlor S."/>
            <person name="Leongamornlert D.A."/>
            <person name="Lloyd D.M."/>
            <person name="Loveland J."/>
            <person name="Lovell J."/>
            <person name="Lush M.J."/>
            <person name="Lyne R."/>
            <person name="Martin S."/>
            <person name="Mashreghi-Mohammadi M."/>
            <person name="Matthews L."/>
            <person name="Matthews N.S.W."/>
            <person name="McLaren S."/>
            <person name="Milne S."/>
            <person name="Mistry S."/>
            <person name="Moore M.J.F."/>
            <person name="Nickerson T."/>
            <person name="O'Dell C.N."/>
            <person name="Oliver K."/>
            <person name="Palmeiri A."/>
            <person name="Palmer S.A."/>
            <person name="Parker A."/>
            <person name="Patel D."/>
            <person name="Pearce A.V."/>
            <person name="Peck A.I."/>
            <person name="Pelan S."/>
            <person name="Phelps K."/>
            <person name="Phillimore B.J."/>
            <person name="Plumb R."/>
            <person name="Rajan J."/>
            <person name="Raymond C."/>
            <person name="Rouse G."/>
            <person name="Saenphimmachak C."/>
            <person name="Sehra H.K."/>
            <person name="Sheridan E."/>
            <person name="Shownkeen R."/>
            <person name="Sims S."/>
            <person name="Skuce C.D."/>
            <person name="Smith M."/>
            <person name="Steward C."/>
            <person name="Subramanian S."/>
            <person name="Sycamore N."/>
            <person name="Tracey A."/>
            <person name="Tromans A."/>
            <person name="Van Helmond Z."/>
            <person name="Wall M."/>
            <person name="Wallis J.M."/>
            <person name="White S."/>
            <person name="Whitehead S.L."/>
            <person name="Wilkinson J.E."/>
            <person name="Willey D.L."/>
            <person name="Williams H."/>
            <person name="Wilming L."/>
            <person name="Wray P.W."/>
            <person name="Wu Z."/>
            <person name="Coulson A."/>
            <person name="Vaudin M."/>
            <person name="Sulston J.E."/>
            <person name="Durbin R.M."/>
            <person name="Hubbard T."/>
            <person name="Wooster R."/>
            <person name="Dunham I."/>
            <person name="Carter N.P."/>
            <person name="McVean G."/>
            <person name="Ross M.T."/>
            <person name="Harrow J."/>
            <person name="Olson M.V."/>
            <person name="Beck S."/>
            <person name="Rogers J."/>
            <person name="Bentley D.R."/>
        </authorList>
    </citation>
    <scope>NUCLEOTIDE SEQUENCE [LARGE SCALE GENOMIC DNA]</scope>
</reference>
<reference key="7">
    <citation type="submission" date="2005-09" db="EMBL/GenBank/DDBJ databases">
        <authorList>
            <person name="Mural R.J."/>
            <person name="Istrail S."/>
            <person name="Sutton G."/>
            <person name="Florea L."/>
            <person name="Halpern A.L."/>
            <person name="Mobarry C.M."/>
            <person name="Lippert R."/>
            <person name="Walenz B."/>
            <person name="Shatkay H."/>
            <person name="Dew I."/>
            <person name="Miller J.R."/>
            <person name="Flanigan M.J."/>
            <person name="Edwards N.J."/>
            <person name="Bolanos R."/>
            <person name="Fasulo D."/>
            <person name="Halldorsson B.V."/>
            <person name="Hannenhalli S."/>
            <person name="Turner R."/>
            <person name="Yooseph S."/>
            <person name="Lu F."/>
            <person name="Nusskern D.R."/>
            <person name="Shue B.C."/>
            <person name="Zheng X.H."/>
            <person name="Zhong F."/>
            <person name="Delcher A.L."/>
            <person name="Huson D.H."/>
            <person name="Kravitz S.A."/>
            <person name="Mouchard L."/>
            <person name="Reinert K."/>
            <person name="Remington K.A."/>
            <person name="Clark A.G."/>
            <person name="Waterman M.S."/>
            <person name="Eichler E.E."/>
            <person name="Adams M.D."/>
            <person name="Hunkapiller M.W."/>
            <person name="Myers E.W."/>
            <person name="Venter J.C."/>
        </authorList>
    </citation>
    <scope>NUCLEOTIDE SEQUENCE [LARGE SCALE GENOMIC DNA]</scope>
</reference>
<reference key="8">
    <citation type="journal article" date="2004" name="Genome Res.">
        <title>The status, quality, and expansion of the NIH full-length cDNA project: the Mammalian Gene Collection (MGC).</title>
        <authorList>
            <consortium name="The MGC Project Team"/>
        </authorList>
    </citation>
    <scope>NUCLEOTIDE SEQUENCE [LARGE SCALE MRNA] (ISOFORM 1)</scope>
    <source>
        <tissue>Prostate</tissue>
    </source>
</reference>
<reference key="9">
    <citation type="journal article" date="1996" name="Proc. Natl. Acad. Sci. U.S.A.">
        <title>Lipid thioesters derived from acylated proteins accumulate in infantile neuronal ceroid lipofuscinosis: correction of the defect in lymphoblasts by recombinant palmitoyl-protein thioesterase.</title>
        <authorList>
            <person name="Lu J.-Y."/>
            <person name="Verkruyse L.A."/>
            <person name="Hofmann S.L."/>
        </authorList>
    </citation>
    <scope>FUNCTION</scope>
</reference>
<reference key="10">
    <citation type="journal article" date="2000" name="J. Neurosci. Res.">
        <title>In vitro depalmitoylation of neurospecific peptides: implication for infantile neuronal ceroid lipofuscinosis.</title>
        <authorList>
            <person name="Cho S."/>
            <person name="Dawson P.E."/>
            <person name="Dawson G."/>
        </authorList>
    </citation>
    <scope>FUNCTION</scope>
    <scope>CATALYTIC ACTIVITY</scope>
    <scope>BIOPHYSICOCHEMICAL PROPERTIES</scope>
</reference>
<reference key="11">
    <citation type="journal article" date="2003" name="J. Biol. Chem.">
        <title>The crystal structure of palmitoyl protein thioesterase-2 (PPT2) reveals the basis for divergent substrate specificities of the two lysosomal thioesterases, PPT1 and PPT2.</title>
        <authorList>
            <person name="Calero G."/>
            <person name="Gupta P."/>
            <person name="Nonato M.C."/>
            <person name="Tandel S."/>
            <person name="Biehl E.R."/>
            <person name="Hofmann S.L."/>
            <person name="Clardy J."/>
        </authorList>
    </citation>
    <scope>FUNCTION</scope>
    <scope>CATALYTIC ACTIVITY</scope>
    <scope>BIOPHYSICOCHEMICAL PROPERTIES</scope>
</reference>
<reference key="12">
    <citation type="journal article" date="2003" name="Nat. Biotechnol.">
        <title>Identification and quantification of N-linked glycoproteins using hydrazide chemistry, stable isotope labeling and mass spectrometry.</title>
        <authorList>
            <person name="Zhang H."/>
            <person name="Li X.-J."/>
            <person name="Martin D.B."/>
            <person name="Aebersold R."/>
        </authorList>
    </citation>
    <scope>GLYCOSYLATION AT ASN-232</scope>
</reference>
<reference key="13">
    <citation type="journal article" date="2009" name="J. Proteome Res.">
        <title>Glycoproteomics analysis of human liver tissue by combination of multiple enzyme digestion and hydrazide chemistry.</title>
        <authorList>
            <person name="Chen R."/>
            <person name="Jiang X."/>
            <person name="Sun D."/>
            <person name="Han G."/>
            <person name="Wang F."/>
            <person name="Ye M."/>
            <person name="Wang L."/>
            <person name="Zou H."/>
        </authorList>
    </citation>
    <scope>GLYCOSYLATION [LARGE SCALE ANALYSIS] AT ASN-197; ASN-212 AND ASN-232</scope>
    <source>
        <tissue>Liver</tissue>
    </source>
</reference>
<reference key="14">
    <citation type="journal article" date="2011" name="BMC Syst. Biol.">
        <title>Initial characterization of the human central proteome.</title>
        <authorList>
            <person name="Burkard T.R."/>
            <person name="Planyavsky M."/>
            <person name="Kaupe I."/>
            <person name="Breitwieser F.P."/>
            <person name="Buerckstuemmer T."/>
            <person name="Bennett K.L."/>
            <person name="Superti-Furga G."/>
            <person name="Colinge J."/>
        </authorList>
    </citation>
    <scope>IDENTIFICATION BY MASS SPECTROMETRY [LARGE SCALE ANALYSIS]</scope>
</reference>
<reference key="15">
    <citation type="journal article" date="2014" name="J. Proteomics">
        <title>An enzyme assisted RP-RPLC approach for in-depth analysis of human liver phosphoproteome.</title>
        <authorList>
            <person name="Bian Y."/>
            <person name="Song C."/>
            <person name="Cheng K."/>
            <person name="Dong M."/>
            <person name="Wang F."/>
            <person name="Huang J."/>
            <person name="Sun D."/>
            <person name="Wang L."/>
            <person name="Ye M."/>
            <person name="Zou H."/>
        </authorList>
    </citation>
    <scope>IDENTIFICATION BY MASS SPECTROMETRY [LARGE SCALE ANALYSIS]</scope>
    <source>
        <tissue>Liver</tissue>
    </source>
</reference>
<reference key="16">
    <citation type="journal article" date="2015" name="Proteomics">
        <title>N-terminome analysis of the human mitochondrial proteome.</title>
        <authorList>
            <person name="Vaca Jacome A.S."/>
            <person name="Rabilloud T."/>
            <person name="Schaeffer-Reiss C."/>
            <person name="Rompais M."/>
            <person name="Ayoub D."/>
            <person name="Lane L."/>
            <person name="Bairoch A."/>
            <person name="Van Dorsselaer A."/>
            <person name="Carapito C."/>
        </authorList>
    </citation>
    <scope>CLEAVAGE OF SIGNAL PEPTIDE [LARGE SCALE ANALYSIS] AFTER LEU-27</scope>
    <scope>IDENTIFICATION BY MASS SPECTROMETRY [LARGE SCALE ANALYSIS]</scope>
</reference>
<reference key="17">
    <citation type="submission" date="2009-04" db="PDB data bank">
        <title>Human palmitoyl-protein thioesterase 1.</title>
        <authorList>
            <consortium name="Structural genomics consortium (SGC)"/>
        </authorList>
    </citation>
    <scope>X-RAY CRYSTALLOGRAPHY (2.53 ANGSTROMS) OF 22-306</scope>
    <scope>DISULFIDE BONDS</scope>
</reference>
<reference key="18">
    <citation type="journal article" date="1998" name="Hum. Mol. Genet.">
        <title>Mutations in the palmitoyl-protein thioesterase gene (PPT; CLN1) causing juvenile neuronal ceroid lipofuscinosis with granular osmiophilic deposits.</title>
        <authorList>
            <person name="Mitchison H.M."/>
            <person name="Hofmann S.L."/>
            <person name="Becerra C.H.R."/>
            <person name="Munroe P.B."/>
            <person name="Lake B.D."/>
            <person name="Crow Y.J."/>
            <person name="Stephenson J.B.P."/>
            <person name="Williams R.E."/>
            <person name="Hofman I.L."/>
            <person name="Taschner P.E.M."/>
            <person name="Martin J.-J."/>
            <person name="Philippart M."/>
            <person name="Andermann E."/>
            <person name="Andermann F."/>
            <person name="Mole S.E."/>
            <person name="Gardiner R.M."/>
            <person name="O'Rawe A.M."/>
        </authorList>
    </citation>
    <scope>VARIANTS CLN1 PRO-75; GLY-79 AND GLN-219</scope>
</reference>
<reference key="19">
    <citation type="journal article" date="1998" name="J. Clin. Invest.">
        <title>Molecular genetics of palmitoyl-protein thioesterase deficiency in the U.S.</title>
        <authorList>
            <person name="Das A.K."/>
            <person name="Becerra C.H.R."/>
            <person name="Yi W."/>
            <person name="Lu J.-Y."/>
            <person name="Siakotos A.N."/>
            <person name="Wisniewski K.E."/>
            <person name="Hofmann S.L."/>
        </authorList>
    </citation>
    <scope>VARIANTS CLN1</scope>
    <scope>VARIANT THR-134</scope>
    <scope>VARIANTS CLN1 GLN-39 AND GLU-42</scope>
</reference>
<reference key="20">
    <citation type="journal article" date="1999" name="Hum. Mutat.">
        <title>Molecular basis of the neuronal ceroid lipofuscinoses: mutations in CLN1, CLN2, CLN3, and CLN5.</title>
        <authorList>
            <person name="Mole S.E."/>
            <person name="Mitchison H.M."/>
            <person name="Munroe P.B."/>
        </authorList>
    </citation>
    <scope>VARIANT CLN1 LEU-181</scope>
</reference>
<reference key="21">
    <citation type="journal article" date="2001" name="Ann. Neurol.">
        <title>Adult neuronal ceroid lipofuscinosis with palmitoyl-protein thioesterase deficiency: first adult-onset patients of a childhood disease.</title>
        <authorList>
            <person name="van Diggelen O.P."/>
            <person name="Thobois S."/>
            <person name="Tilikete C."/>
            <person name="Zabot M.-T."/>
            <person name="Keulemans J.L.M."/>
            <person name="van Bunderen P.A."/>
            <person name="Taschner P.E.M."/>
            <person name="Losekoot M."/>
            <person name="Voznyi Y.V."/>
        </authorList>
    </citation>
    <scope>VARIANT CLN1 ARG-108</scope>
</reference>
<reference key="22">
    <citation type="journal article" date="2009" name="BMC Cell Biol.">
        <title>Novel interactions of CLN5 support molecular networking between neuronal ceroid lipofuscinosis proteins.</title>
        <authorList>
            <person name="Lyly A."/>
            <person name="von Schantz C."/>
            <person name="Heine C."/>
            <person name="Schmiedt M.L."/>
            <person name="Sipilae T."/>
            <person name="Jalanko A."/>
            <person name="Kyttaelae A."/>
        </authorList>
    </citation>
    <scope>CHARACTERIZATION OF VARIANTS CLN1 ARG-108 AND TRP-122</scope>
    <scope>INTERACTION WITH CLN5</scope>
    <scope>SUBCELLULAR LOCATION</scope>
</reference>
<reference key="23">
    <citation type="journal article" date="2009" name="Brain">
        <title>Mutations in CLN7/MFSD8 are a common cause of variant late-infantile neuronal ceroid lipofuscinosis.</title>
        <authorList>
            <person name="Kousi M."/>
            <person name="Siintola E."/>
            <person name="Dvorakova L."/>
            <person name="Vlaskova H."/>
            <person name="Turnbull J."/>
            <person name="Topcu M."/>
            <person name="Yuksel D."/>
            <person name="Gokben S."/>
            <person name="Minassian B.A."/>
            <person name="Elleder M."/>
            <person name="Mole S.E."/>
            <person name="Lehesjoki A.-E."/>
        </authorList>
    </citation>
    <scope>VARIANT CLN1 CYS-38</scope>
</reference>
<reference key="24">
    <citation type="journal article" date="2012" name="Hum. Mutat.">
        <title>Update of the mutation spectrum and clinical correlations of over 360 mutations in eight genes that underlie the neuronal ceroid lipofuscinoses.</title>
        <authorList>
            <person name="Kousi M."/>
            <person name="Lehesjoki A.E."/>
            <person name="Mole S.E."/>
        </authorList>
    </citation>
    <scope>VARIANTS CLN1 TYR-45; PRO-75; GLY-79; ARG-108; ASP-109; LEU-138; TYR-152; GLU-177; MET-181; ARG-187; ARG-189; GLN-219; PRO-222; GLY-228; HIS-247; VAL-250; ARG-296 AND PRO-305</scope>
</reference>
<reference key="25">
    <citation type="journal article" date="2016" name="PLoS ONE">
        <title>Reversible Cysteine Acylation Regulates the Activity of Human Palmitoyl-Protein Thioesterase 1 (PPT1).</title>
        <authorList>
            <person name="Segal-Salto M."/>
            <person name="Sapir T."/>
            <person name="Reiner O."/>
        </authorList>
    </citation>
    <scope>FUNCTION</scope>
    <scope>CATALYTIC ACTIVITY</scope>
    <scope>PALMITOYLATION AT CYS-6</scope>
    <scope>MUTAGENESIS OF CYS-6</scope>
    <scope>SUBCELLULAR LOCATION</scope>
    <scope>ACTIVITY REGULATION</scope>
</reference>
<sequence>MASPGCLWLLAVALLPWTCASRALQHLDPPAPLPLVIWHGMGDSCCNPLSMGAIKKMVEKKIPGIYVLSLEIGKTLMEDVENSFFLNVNSQVTTVCQALAKDPKLQQGYNAMGFSQGGQFLRAVAQRCPSPPMINLISVGGQHQGVFGLPRCPGESSHICDFIRKTLNAGAYSKVVQERLVQAEYWHDPIKEDVYRNHSIFLADINQERGINESYKKNLMALKKFVMVKFLNDSIVDPVDSEWFGFYRSGQAKETIPLQETSLYTQDRLGLKEMDNAGQLVFLATEGDHLQLSEEWFYAHIIPFLG</sequence>
<gene>
    <name type="primary">PPT1</name>
    <name evidence="19" type="synonym">CLN1</name>
    <name type="synonym">PPT</name>
</gene>
<feature type="signal peptide" evidence="22">
    <location>
        <begin position="1"/>
        <end position="27"/>
    </location>
</feature>
<feature type="chain" id="PRO_0000025550" description="Palmitoyl-protein thioesterase 1">
    <location>
        <begin position="28"/>
        <end position="306"/>
    </location>
</feature>
<feature type="active site" evidence="2">
    <location>
        <position position="115"/>
    </location>
</feature>
<feature type="active site" evidence="2">
    <location>
        <position position="233"/>
    </location>
</feature>
<feature type="active site" evidence="2">
    <location>
        <position position="289"/>
    </location>
</feature>
<feature type="lipid moiety-binding region" description="S-palmitoyl cysteine; by ZDHHC3 and ZDHHC7" evidence="12">
    <location>
        <position position="6"/>
    </location>
</feature>
<feature type="glycosylation site" description="N-linked (GlcNAc...) asparagine" evidence="8">
    <location>
        <position position="197"/>
    </location>
</feature>
<feature type="glycosylation site" description="N-linked (GlcNAc...) asparagine" evidence="8">
    <location>
        <position position="212"/>
    </location>
</feature>
<feature type="glycosylation site" description="N-linked (GlcNAc...) asparagine" evidence="6 8">
    <location>
        <position position="232"/>
    </location>
</feature>
<feature type="disulfide bond" evidence="17">
    <location>
        <begin position="45"/>
        <end position="46"/>
    </location>
</feature>
<feature type="disulfide bond" evidence="17">
    <location>
        <begin position="96"/>
        <end position="128"/>
    </location>
</feature>
<feature type="disulfide bond" evidence="17">
    <location>
        <begin position="152"/>
        <end position="160"/>
    </location>
</feature>
<feature type="splice variant" id="VSP_042033" description="In isoform 2." evidence="18">
    <location>
        <begin position="42"/>
        <end position="144"/>
    </location>
</feature>
<feature type="sequence variant" id="VAR_058434" description="In CLN1; dbSNP:rs386833626." evidence="9">
    <original>W</original>
    <variation>C</variation>
    <location>
        <position position="38"/>
    </location>
</feature>
<feature type="sequence variant" id="VAR_005548" description="In CLN1; dbSNP:rs386833627." evidence="16">
    <original>H</original>
    <variation>Q</variation>
    <location>
        <position position="39"/>
    </location>
</feature>
<feature type="sequence variant" id="VAR_005549" description="In CLN1; dbSNP:rs386833631." evidence="16">
    <original>G</original>
    <variation>E</variation>
    <location>
        <position position="42"/>
    </location>
</feature>
<feature type="sequence variant" id="VAR_066874" description="In CLN1; dbSNP:rs137852702." evidence="11">
    <original>C</original>
    <variation>Y</variation>
    <location>
        <position position="45"/>
    </location>
</feature>
<feature type="sequence variant" id="VAR_005550" description="In CLN1; juvenile onset; dbSNP:rs137852696." evidence="11 15">
    <original>T</original>
    <variation>P</variation>
    <location>
        <position position="75"/>
    </location>
</feature>
<feature type="sequence variant" id="VAR_005551" description="In CLN1; juvenile onset; dbSNP:rs137852697." evidence="11 15">
    <original>D</original>
    <variation>G</variation>
    <location>
        <position position="79"/>
    </location>
</feature>
<feature type="sequence variant" id="VAR_018511" description="In CLN1; onset in adulthood; retained in the endoplasmic reticulum rather than reaching the lysosome; dbSNP:rs137852701." evidence="5 10 11">
    <original>G</original>
    <variation>R</variation>
    <location>
        <position position="108"/>
    </location>
</feature>
<feature type="sequence variant" id="VAR_005552" description="In CLN1; late infantile form; dbSNP:rs386833642." evidence="11">
    <original>Y</original>
    <variation>D</variation>
    <location>
        <position position="109"/>
    </location>
</feature>
<feature type="sequence variant" id="VAR_005553" description="In CLN1; retained in the endoplasmic reticulum rather than reaching the lysosome; dbSNP:rs137852695." evidence="10 13">
    <original>R</original>
    <variation>W</variation>
    <location>
        <position position="122"/>
    </location>
</feature>
<feature type="sequence variant" id="VAR_005554" description="In dbSNP:rs1800205." evidence="16">
    <original>I</original>
    <variation>T</variation>
    <location>
        <position position="134"/>
    </location>
</feature>
<feature type="sequence variant" id="VAR_066875" description="In CLN1; dbSNP:rs386833646." evidence="11">
    <original>S</original>
    <variation>L</variation>
    <location>
        <position position="138"/>
    </location>
</feature>
<feature type="sequence variant" id="VAR_066876" description="In CLN1; dbSNP:rs386833647." evidence="11">
    <original>C</original>
    <variation>Y</variation>
    <location>
        <position position="152"/>
    </location>
</feature>
<feature type="sequence variant" id="VAR_005555" description="In CLN1; late infantile form; dbSNP:rs386833650." evidence="11">
    <original>Q</original>
    <variation>E</variation>
    <location>
        <position position="177"/>
    </location>
</feature>
<feature type="sequence variant" id="VAR_005556" description="In CLN1; dbSNP:rs148412181." evidence="3">
    <original>V</original>
    <variation>L</variation>
    <location>
        <position position="181"/>
    </location>
</feature>
<feature type="sequence variant" id="VAR_005557" description="In CLN1; late infantile form; dbSNP:rs148412181." evidence="11">
    <original>V</original>
    <variation>M</variation>
    <location>
        <position position="181"/>
    </location>
</feature>
<feature type="sequence variant" id="VAR_066877" description="In CLN1; dbSNP:rs386833657." evidence="11">
    <original>H</original>
    <variation>R</variation>
    <location>
        <position position="187"/>
    </location>
</feature>
<feature type="sequence variant" id="VAR_066878" description="In CLN1; dbSNP:rs386833658." evidence="11">
    <original>P</original>
    <variation>R</variation>
    <location>
        <position position="189"/>
    </location>
</feature>
<feature type="sequence variant" id="VAR_005558" description="In CLN1; juvenile onset; dbSNP:rs137852698." evidence="11 15">
    <original>L</original>
    <variation>Q</variation>
    <location>
        <position position="219"/>
    </location>
</feature>
<feature type="sequence variant" id="VAR_066879" description="In CLN1; late infantile form; dbSNP:rs386833661." evidence="11">
    <original>L</original>
    <variation>P</variation>
    <location>
        <position position="222"/>
    </location>
</feature>
<feature type="sequence variant" id="VAR_066880" description="In CLN1; dbSNP:rs386833663." evidence="11">
    <original>V</original>
    <variation>G</variation>
    <location>
        <position position="228"/>
    </location>
</feature>
<feature type="sequence variant" id="VAR_005559" description="In CLN1; dbSNP:rs386833665." evidence="11">
    <original>Y</original>
    <variation>H</variation>
    <location>
        <position position="247"/>
    </location>
</feature>
<feature type="sequence variant" id="VAR_005560" description="In CLN1; dbSNP:rs386833666." evidence="11">
    <original>G</original>
    <variation>V</variation>
    <location>
        <position position="250"/>
    </location>
</feature>
<feature type="sequence variant" id="VAR_066881" description="In CLN1; dbSNP:rs386833669." evidence="11">
    <original>W</original>
    <variation>R</variation>
    <location>
        <position position="296"/>
    </location>
</feature>
<feature type="sequence variant" id="VAR_066882" description="In CLN1; dbSNP:rs386833671." evidence="11">
    <original>L</original>
    <variation>P</variation>
    <location>
        <position position="305"/>
    </location>
</feature>
<feature type="mutagenesis site" description="Does not affect its subcellular localizations. Increases depalmitoylation activity." evidence="12">
    <original>C</original>
    <variation>S</variation>
    <location>
        <position position="6"/>
    </location>
</feature>
<feature type="strand" evidence="23">
    <location>
        <begin position="35"/>
        <end position="38"/>
    </location>
</feature>
<feature type="turn" evidence="23">
    <location>
        <begin position="48"/>
        <end position="50"/>
    </location>
</feature>
<feature type="helix" evidence="23">
    <location>
        <begin position="51"/>
        <end position="61"/>
    </location>
</feature>
<feature type="strand" evidence="23">
    <location>
        <begin position="67"/>
        <end position="69"/>
    </location>
</feature>
<feature type="strand" evidence="23">
    <location>
        <begin position="73"/>
        <end position="75"/>
    </location>
</feature>
<feature type="helix" evidence="23">
    <location>
        <begin position="76"/>
        <end position="85"/>
    </location>
</feature>
<feature type="helix" evidence="23">
    <location>
        <begin position="88"/>
        <end position="101"/>
    </location>
</feature>
<feature type="helix" evidence="23">
    <location>
        <begin position="103"/>
        <end position="105"/>
    </location>
</feature>
<feature type="strand" evidence="23">
    <location>
        <begin position="109"/>
        <end position="114"/>
    </location>
</feature>
<feature type="helix" evidence="23">
    <location>
        <begin position="116"/>
        <end position="127"/>
    </location>
</feature>
<feature type="strand" evidence="23">
    <location>
        <begin position="133"/>
        <end position="140"/>
    </location>
</feature>
<feature type="strand" evidence="23">
    <location>
        <begin position="153"/>
        <end position="155"/>
    </location>
</feature>
<feature type="helix" evidence="23">
    <location>
        <begin position="157"/>
        <end position="170"/>
    </location>
</feature>
<feature type="helix" evidence="23">
    <location>
        <begin position="174"/>
        <end position="177"/>
    </location>
</feature>
<feature type="helix" evidence="23">
    <location>
        <begin position="181"/>
        <end position="185"/>
    </location>
</feature>
<feature type="strand" evidence="23">
    <location>
        <begin position="189"/>
        <end position="191"/>
    </location>
</feature>
<feature type="helix" evidence="23">
    <location>
        <begin position="192"/>
        <end position="198"/>
    </location>
</feature>
<feature type="helix" evidence="23">
    <location>
        <begin position="202"/>
        <end position="205"/>
    </location>
</feature>
<feature type="strand" evidence="23">
    <location>
        <begin position="208"/>
        <end position="210"/>
    </location>
</feature>
<feature type="helix" evidence="23">
    <location>
        <begin position="213"/>
        <end position="220"/>
    </location>
</feature>
<feature type="strand" evidence="23">
    <location>
        <begin position="223"/>
        <end position="230"/>
    </location>
</feature>
<feature type="strand" evidence="23">
    <location>
        <begin position="234"/>
        <end position="238"/>
    </location>
</feature>
<feature type="helix" evidence="23">
    <location>
        <begin position="239"/>
        <end position="243"/>
    </location>
</feature>
<feature type="helix" evidence="23">
    <location>
        <begin position="258"/>
        <end position="260"/>
    </location>
</feature>
<feature type="helix" evidence="23">
    <location>
        <begin position="262"/>
        <end position="265"/>
    </location>
</feature>
<feature type="strand" evidence="23">
    <location>
        <begin position="268"/>
        <end position="270"/>
    </location>
</feature>
<feature type="helix" evidence="23">
    <location>
        <begin position="271"/>
        <end position="276"/>
    </location>
</feature>
<feature type="strand" evidence="23">
    <location>
        <begin position="280"/>
        <end position="288"/>
    </location>
</feature>
<feature type="helix" evidence="23">
    <location>
        <begin position="294"/>
        <end position="300"/>
    </location>
</feature>
<feature type="helix" evidence="23">
    <location>
        <begin position="302"/>
        <end position="305"/>
    </location>
</feature>
<protein>
    <recommendedName>
        <fullName>Palmitoyl-protein thioesterase 1</fullName>
        <shortName>PPT-1</shortName>
        <ecNumber evidence="7 12">3.1.2.2</ecNumber>
        <ecNumber evidence="4 7">3.1.2.22</ecNumber>
    </recommendedName>
    <alternativeName>
        <fullName>Palmitoyl-protein hydrolase 1</fullName>
    </alternativeName>
</protein>
<evidence type="ECO:0000250" key="1">
    <source>
        <dbReference type="UniProtKB" id="O88531"/>
    </source>
</evidence>
<evidence type="ECO:0000250" key="2">
    <source>
        <dbReference type="UniProtKB" id="P45478"/>
    </source>
</evidence>
<evidence type="ECO:0000269" key="3">
    <source>
    </source>
</evidence>
<evidence type="ECO:0000269" key="4">
    <source>
    </source>
</evidence>
<evidence type="ECO:0000269" key="5">
    <source>
    </source>
</evidence>
<evidence type="ECO:0000269" key="6">
    <source>
    </source>
</evidence>
<evidence type="ECO:0000269" key="7">
    <source>
    </source>
</evidence>
<evidence type="ECO:0000269" key="8">
    <source>
    </source>
</evidence>
<evidence type="ECO:0000269" key="9">
    <source>
    </source>
</evidence>
<evidence type="ECO:0000269" key="10">
    <source>
    </source>
</evidence>
<evidence type="ECO:0000269" key="11">
    <source>
    </source>
</evidence>
<evidence type="ECO:0000269" key="12">
    <source>
    </source>
</evidence>
<evidence type="ECO:0000269" key="13">
    <source>
    </source>
</evidence>
<evidence type="ECO:0000269" key="14">
    <source>
    </source>
</evidence>
<evidence type="ECO:0000269" key="15">
    <source>
    </source>
</evidence>
<evidence type="ECO:0000269" key="16">
    <source>
    </source>
</evidence>
<evidence type="ECO:0000269" key="17">
    <source ref="17"/>
</evidence>
<evidence type="ECO:0000303" key="18">
    <source>
    </source>
</evidence>
<evidence type="ECO:0000303" key="19">
    <source>
    </source>
</evidence>
<evidence type="ECO:0000305" key="20"/>
<evidence type="ECO:0000305" key="21">
    <source>
    </source>
</evidence>
<evidence type="ECO:0007744" key="22">
    <source>
    </source>
</evidence>
<evidence type="ECO:0007829" key="23">
    <source>
        <dbReference type="PDB" id="3GRO"/>
    </source>
</evidence>
<keyword id="KW-0002">3D-structure</keyword>
<keyword id="KW-0025">Alternative splicing</keyword>
<keyword id="KW-0225">Disease variant</keyword>
<keyword id="KW-1015">Disulfide bond</keyword>
<keyword id="KW-0256">Endoplasmic reticulum</keyword>
<keyword id="KW-0325">Glycoprotein</keyword>
<keyword id="KW-0333">Golgi apparatus</keyword>
<keyword id="KW-0378">Hydrolase</keyword>
<keyword id="KW-0449">Lipoprotein</keyword>
<keyword id="KW-0458">Lysosome</keyword>
<keyword id="KW-0523">Neurodegeneration</keyword>
<keyword id="KW-0525">Neuronal ceroid lipofuscinosis</keyword>
<keyword id="KW-0564">Palmitate</keyword>
<keyword id="KW-1267">Proteomics identification</keyword>
<keyword id="KW-1185">Reference proteome</keyword>
<keyword id="KW-0964">Secreted</keyword>
<keyword id="KW-0716">Sensory transduction</keyword>
<keyword id="KW-0732">Signal</keyword>
<keyword id="KW-0844">Vision</keyword>
<dbReference type="EC" id="3.1.2.2" evidence="7 12"/>
<dbReference type="EC" id="3.1.2.22" evidence="4 7"/>
<dbReference type="EMBL" id="L42809">
    <property type="protein sequence ID" value="AAA85337.1"/>
    <property type="molecule type" value="Genomic_DNA"/>
</dbReference>
<dbReference type="EMBL" id="U44772">
    <property type="protein sequence ID" value="AAB06236.1"/>
    <property type="molecule type" value="mRNA"/>
</dbReference>
<dbReference type="EMBL" id="AF022211">
    <property type="protein sequence ID" value="AAB72224.1"/>
    <property type="molecule type" value="Genomic_DNA"/>
</dbReference>
<dbReference type="EMBL" id="AF022203">
    <property type="protein sequence ID" value="AAB72224.1"/>
    <property type="status" value="JOINED"/>
    <property type="molecule type" value="Genomic_DNA"/>
</dbReference>
<dbReference type="EMBL" id="AF022204">
    <property type="protein sequence ID" value="AAB72224.1"/>
    <property type="status" value="JOINED"/>
    <property type="molecule type" value="Genomic_DNA"/>
</dbReference>
<dbReference type="EMBL" id="AF022205">
    <property type="protein sequence ID" value="AAB72224.1"/>
    <property type="status" value="JOINED"/>
    <property type="molecule type" value="Genomic_DNA"/>
</dbReference>
<dbReference type="EMBL" id="AF022206">
    <property type="protein sequence ID" value="AAB72224.1"/>
    <property type="status" value="JOINED"/>
    <property type="molecule type" value="Genomic_DNA"/>
</dbReference>
<dbReference type="EMBL" id="AF022207">
    <property type="protein sequence ID" value="AAB72224.1"/>
    <property type="status" value="JOINED"/>
    <property type="molecule type" value="Genomic_DNA"/>
</dbReference>
<dbReference type="EMBL" id="AF022208">
    <property type="protein sequence ID" value="AAB72224.1"/>
    <property type="status" value="JOINED"/>
    <property type="molecule type" value="Genomic_DNA"/>
</dbReference>
<dbReference type="EMBL" id="AF022209">
    <property type="protein sequence ID" value="AAB72224.1"/>
    <property type="status" value="JOINED"/>
    <property type="molecule type" value="Genomic_DNA"/>
</dbReference>
<dbReference type="EMBL" id="AF022210">
    <property type="protein sequence ID" value="AAB72224.1"/>
    <property type="status" value="JOINED"/>
    <property type="molecule type" value="Genomic_DNA"/>
</dbReference>
<dbReference type="EMBL" id="AK302232">
    <property type="protein sequence ID" value="BAG63586.1"/>
    <property type="molecule type" value="mRNA"/>
</dbReference>
<dbReference type="EMBL" id="AK312287">
    <property type="protein sequence ID" value="BAG35214.1"/>
    <property type="molecule type" value="mRNA"/>
</dbReference>
<dbReference type="EMBL" id="CR542053">
    <property type="protein sequence ID" value="CAG46850.1"/>
    <property type="molecule type" value="mRNA"/>
</dbReference>
<dbReference type="EMBL" id="AL512599">
    <property type="status" value="NOT_ANNOTATED_CDS"/>
    <property type="molecule type" value="Genomic_DNA"/>
</dbReference>
<dbReference type="EMBL" id="CH471059">
    <property type="protein sequence ID" value="EAX07237.1"/>
    <property type="molecule type" value="Genomic_DNA"/>
</dbReference>
<dbReference type="EMBL" id="CH471059">
    <property type="protein sequence ID" value="EAX07238.1"/>
    <property type="molecule type" value="Genomic_DNA"/>
</dbReference>
<dbReference type="EMBL" id="BC008426">
    <property type="protein sequence ID" value="AAH08426.1"/>
    <property type="molecule type" value="mRNA"/>
</dbReference>
<dbReference type="CCDS" id="CCDS44119.1">
    <molecule id="P50897-2"/>
</dbReference>
<dbReference type="CCDS" id="CCDS447.1">
    <molecule id="P50897-1"/>
</dbReference>
<dbReference type="PIR" id="I58097">
    <property type="entry name" value="I58097"/>
</dbReference>
<dbReference type="RefSeq" id="NP_000301.1">
    <molecule id="P50897-1"/>
    <property type="nucleotide sequence ID" value="NM_000310.4"/>
</dbReference>
<dbReference type="RefSeq" id="NP_001136076.1">
    <molecule id="P50897-2"/>
    <property type="nucleotide sequence ID" value="NM_001142604.2"/>
</dbReference>
<dbReference type="PDB" id="3GRO">
    <property type="method" value="X-ray"/>
    <property type="resolution" value="2.53 A"/>
    <property type="chains" value="A/B=22-306"/>
</dbReference>
<dbReference type="PDBsum" id="3GRO"/>
<dbReference type="SASBDB" id="P50897"/>
<dbReference type="SMR" id="P50897"/>
<dbReference type="BioGRID" id="111530">
    <property type="interactions" value="266"/>
</dbReference>
<dbReference type="FunCoup" id="P50897">
    <property type="interactions" value="2193"/>
</dbReference>
<dbReference type="IntAct" id="P50897">
    <property type="interactions" value="100"/>
</dbReference>
<dbReference type="MINT" id="P50897"/>
<dbReference type="STRING" id="9606.ENSP00000493153"/>
<dbReference type="BindingDB" id="P50897"/>
<dbReference type="ChEMBL" id="CHEMBL2331051"/>
<dbReference type="DrugBank" id="DB02035">
    <property type="generic name" value="Hexadecanesulfonyl fluoride"/>
</dbReference>
<dbReference type="DrugBank" id="DB03796">
    <property type="generic name" value="Palmitic Acid"/>
</dbReference>
<dbReference type="DrugBank" id="DB04977">
    <property type="generic name" value="Plitidepsin"/>
</dbReference>
<dbReference type="ESTHER" id="human-PPT1">
    <property type="family name" value="Palmitoyl-protein_thioesterase"/>
</dbReference>
<dbReference type="GlyConnect" id="1592">
    <property type="glycosylation" value="28 N-Linked glycans (3 sites)"/>
</dbReference>
<dbReference type="GlyCosmos" id="P50897">
    <property type="glycosylation" value="4 sites, 31 glycans"/>
</dbReference>
<dbReference type="GlyGen" id="P50897">
    <property type="glycosylation" value="5 sites, 79 N-linked glycans (3 sites), 1 N-linked;o-linked glycan (2 sites), 1 O-linked glycan (1 site)"/>
</dbReference>
<dbReference type="iPTMnet" id="P50897"/>
<dbReference type="PhosphoSitePlus" id="P50897"/>
<dbReference type="SwissPalm" id="P50897"/>
<dbReference type="BioMuta" id="PPT1"/>
<dbReference type="DMDM" id="1709747"/>
<dbReference type="jPOST" id="P50897"/>
<dbReference type="MassIVE" id="P50897"/>
<dbReference type="PaxDb" id="9606-ENSP00000394863"/>
<dbReference type="PeptideAtlas" id="P50897"/>
<dbReference type="ProteomicsDB" id="56269">
    <molecule id="P50897-1"/>
</dbReference>
<dbReference type="ProteomicsDB" id="56270">
    <molecule id="P50897-2"/>
</dbReference>
<dbReference type="Pumba" id="P50897"/>
<dbReference type="Antibodypedia" id="17941">
    <property type="antibodies" value="447 antibodies from 33 providers"/>
</dbReference>
<dbReference type="DNASU" id="5538"/>
<dbReference type="Ensembl" id="ENST00000449045.7">
    <molecule id="P50897-2"/>
    <property type="protein sequence ID" value="ENSP00000392293.2"/>
    <property type="gene ID" value="ENSG00000131238.18"/>
</dbReference>
<dbReference type="Ensembl" id="ENST00000529905.5">
    <molecule id="P50897-1"/>
    <property type="protein sequence ID" value="ENSP00000432053.1"/>
    <property type="gene ID" value="ENSG00000131238.18"/>
</dbReference>
<dbReference type="Ensembl" id="ENST00000642050.2">
    <molecule id="P50897-1"/>
    <property type="protein sequence ID" value="ENSP00000493153.1"/>
    <property type="gene ID" value="ENSG00000131238.18"/>
</dbReference>
<dbReference type="GeneID" id="5538"/>
<dbReference type="KEGG" id="hsa:5538"/>
<dbReference type="MANE-Select" id="ENST00000642050.2">
    <property type="protein sequence ID" value="ENSP00000493153.1"/>
    <property type="RefSeq nucleotide sequence ID" value="NM_000310.4"/>
    <property type="RefSeq protein sequence ID" value="NP_000301.1"/>
</dbReference>
<dbReference type="UCSC" id="uc001cfb.3">
    <molecule id="P50897-1"/>
    <property type="organism name" value="human"/>
</dbReference>
<dbReference type="AGR" id="HGNC:9325"/>
<dbReference type="CTD" id="5538"/>
<dbReference type="DisGeNET" id="5538"/>
<dbReference type="GeneCards" id="PPT1"/>
<dbReference type="HGNC" id="HGNC:9325">
    <property type="gene designation" value="PPT1"/>
</dbReference>
<dbReference type="HPA" id="ENSG00000131238">
    <property type="expression patterns" value="Low tissue specificity"/>
</dbReference>
<dbReference type="MalaCards" id="PPT1"/>
<dbReference type="MIM" id="256730">
    <property type="type" value="phenotype"/>
</dbReference>
<dbReference type="MIM" id="600722">
    <property type="type" value="gene"/>
</dbReference>
<dbReference type="neXtProt" id="NX_P50897"/>
<dbReference type="OpenTargets" id="ENSG00000131238"/>
<dbReference type="Orphanet" id="228329">
    <property type="disease" value="CLN1 disease"/>
</dbReference>
<dbReference type="PharmGKB" id="PA33688"/>
<dbReference type="VEuPathDB" id="HostDB:ENSG00000131238"/>
<dbReference type="eggNOG" id="KOG2541">
    <property type="taxonomic scope" value="Eukaryota"/>
</dbReference>
<dbReference type="GeneTree" id="ENSGT00940000156790"/>
<dbReference type="InParanoid" id="P50897"/>
<dbReference type="OMA" id="KFVMVMF"/>
<dbReference type="OrthoDB" id="10263094at2759"/>
<dbReference type="PAN-GO" id="P50897">
    <property type="GO annotations" value="5 GO annotations based on evolutionary models"/>
</dbReference>
<dbReference type="PhylomeDB" id="P50897"/>
<dbReference type="TreeFam" id="TF323926"/>
<dbReference type="BRENDA" id="3.1.2.2">
    <property type="organism ID" value="2681"/>
</dbReference>
<dbReference type="BRENDA" id="3.1.2.22">
    <property type="organism ID" value="2681"/>
</dbReference>
<dbReference type="PathwayCommons" id="P50897"/>
<dbReference type="Reactome" id="R-HSA-75105">
    <property type="pathway name" value="Fatty acyl-CoA biosynthesis"/>
</dbReference>
<dbReference type="SignaLink" id="P50897"/>
<dbReference type="BioGRID-ORCS" id="5538">
    <property type="hits" value="16 hits in 1179 CRISPR screens"/>
</dbReference>
<dbReference type="ChiTaRS" id="PPT1">
    <property type="organism name" value="human"/>
</dbReference>
<dbReference type="EvolutionaryTrace" id="P50897"/>
<dbReference type="GeneWiki" id="PPT1"/>
<dbReference type="GenomeRNAi" id="5538"/>
<dbReference type="Pharos" id="P50897">
    <property type="development level" value="Tbio"/>
</dbReference>
<dbReference type="PRO" id="PR:P50897"/>
<dbReference type="Proteomes" id="UP000005640">
    <property type="component" value="Chromosome 1"/>
</dbReference>
<dbReference type="RNAct" id="P50897">
    <property type="molecule type" value="protein"/>
</dbReference>
<dbReference type="Bgee" id="ENSG00000131238">
    <property type="expression patterns" value="Expressed in monocyte and 215 other cell types or tissues"/>
</dbReference>
<dbReference type="ExpressionAtlas" id="P50897">
    <property type="expression patterns" value="baseline and differential"/>
</dbReference>
<dbReference type="GO" id="GO:0030424">
    <property type="term" value="C:axon"/>
    <property type="evidence" value="ECO:0000314"/>
    <property type="project" value="UniProtKB"/>
</dbReference>
<dbReference type="GO" id="GO:0005829">
    <property type="term" value="C:cytosol"/>
    <property type="evidence" value="ECO:0000250"/>
    <property type="project" value="UniProtKB"/>
</dbReference>
<dbReference type="GO" id="GO:0030425">
    <property type="term" value="C:dendrite"/>
    <property type="evidence" value="ECO:0007669"/>
    <property type="project" value="Ensembl"/>
</dbReference>
<dbReference type="GO" id="GO:0070062">
    <property type="term" value="C:extracellular exosome"/>
    <property type="evidence" value="ECO:0007005"/>
    <property type="project" value="UniProtKB"/>
</dbReference>
<dbReference type="GO" id="GO:0005576">
    <property type="term" value="C:extracellular region"/>
    <property type="evidence" value="ECO:0000314"/>
    <property type="project" value="UniProtKB"/>
</dbReference>
<dbReference type="GO" id="GO:0005794">
    <property type="term" value="C:Golgi apparatus"/>
    <property type="evidence" value="ECO:0000314"/>
    <property type="project" value="HPA"/>
</dbReference>
<dbReference type="GO" id="GO:0043231">
    <property type="term" value="C:intracellular membrane-bounded organelle"/>
    <property type="evidence" value="ECO:0000314"/>
    <property type="project" value="HPA"/>
</dbReference>
<dbReference type="GO" id="GO:0043202">
    <property type="term" value="C:lysosomal lumen"/>
    <property type="evidence" value="ECO:0000304"/>
    <property type="project" value="Reactome"/>
</dbReference>
<dbReference type="GO" id="GO:0005765">
    <property type="term" value="C:lysosomal membrane"/>
    <property type="evidence" value="ECO:0000314"/>
    <property type="project" value="UniProt"/>
</dbReference>
<dbReference type="GO" id="GO:0005764">
    <property type="term" value="C:lysosome"/>
    <property type="evidence" value="ECO:0000314"/>
    <property type="project" value="UniProtKB"/>
</dbReference>
<dbReference type="GO" id="GO:0016020">
    <property type="term" value="C:membrane"/>
    <property type="evidence" value="ECO:0007005"/>
    <property type="project" value="UniProtKB"/>
</dbReference>
<dbReference type="GO" id="GO:0045121">
    <property type="term" value="C:membrane raft"/>
    <property type="evidence" value="ECO:0000314"/>
    <property type="project" value="UniProtKB"/>
</dbReference>
<dbReference type="GO" id="GO:0043025">
    <property type="term" value="C:neuronal cell body"/>
    <property type="evidence" value="ECO:0007669"/>
    <property type="project" value="Ensembl"/>
</dbReference>
<dbReference type="GO" id="GO:0005634">
    <property type="term" value="C:nucleus"/>
    <property type="evidence" value="ECO:0000314"/>
    <property type="project" value="UniProtKB"/>
</dbReference>
<dbReference type="GO" id="GO:0099523">
    <property type="term" value="C:presynaptic cytosol"/>
    <property type="evidence" value="ECO:0007669"/>
    <property type="project" value="Ensembl"/>
</dbReference>
<dbReference type="GO" id="GO:0008021">
    <property type="term" value="C:synaptic vesicle"/>
    <property type="evidence" value="ECO:0000314"/>
    <property type="project" value="UniProtKB"/>
</dbReference>
<dbReference type="GO" id="GO:0030672">
    <property type="term" value="C:synaptic vesicle membrane"/>
    <property type="evidence" value="ECO:0007669"/>
    <property type="project" value="Ensembl"/>
</dbReference>
<dbReference type="GO" id="GO:0052816">
    <property type="term" value="F:long-chain fatty acyl-CoA hydrolase activity"/>
    <property type="evidence" value="ECO:0000314"/>
    <property type="project" value="UniProtKB"/>
</dbReference>
<dbReference type="GO" id="GO:0035727">
    <property type="term" value="F:lysophosphatidic acid binding"/>
    <property type="evidence" value="ECO:0000314"/>
    <property type="project" value="UniProtKB"/>
</dbReference>
<dbReference type="GO" id="GO:0008474">
    <property type="term" value="F:palmitoyl-(protein) hydrolase activity"/>
    <property type="evidence" value="ECO:0000314"/>
    <property type="project" value="UniProtKB"/>
</dbReference>
<dbReference type="GO" id="GO:0120146">
    <property type="term" value="F:sulfatide binding"/>
    <property type="evidence" value="ECO:0000314"/>
    <property type="project" value="UniProtKB"/>
</dbReference>
<dbReference type="GO" id="GO:0008344">
    <property type="term" value="P:adult locomotory behavior"/>
    <property type="evidence" value="ECO:0007669"/>
    <property type="project" value="Ensembl"/>
</dbReference>
<dbReference type="GO" id="GO:0008306">
    <property type="term" value="P:associative learning"/>
    <property type="evidence" value="ECO:0007669"/>
    <property type="project" value="Ensembl"/>
</dbReference>
<dbReference type="GO" id="GO:0007420">
    <property type="term" value="P:brain development"/>
    <property type="evidence" value="ECO:0000315"/>
    <property type="project" value="UniProtKB"/>
</dbReference>
<dbReference type="GO" id="GO:0006897">
    <property type="term" value="P:endocytosis"/>
    <property type="evidence" value="ECO:0000318"/>
    <property type="project" value="GO_Central"/>
</dbReference>
<dbReference type="GO" id="GO:0046949">
    <property type="term" value="P:fatty-acyl-CoA biosynthetic process"/>
    <property type="evidence" value="ECO:0000304"/>
    <property type="project" value="Reactome"/>
</dbReference>
<dbReference type="GO" id="GO:0007625">
    <property type="term" value="P:grooming behavior"/>
    <property type="evidence" value="ECO:0007669"/>
    <property type="project" value="Ensembl"/>
</dbReference>
<dbReference type="GO" id="GO:0016042">
    <property type="term" value="P:lipid catabolic process"/>
    <property type="evidence" value="ECO:0000314"/>
    <property type="project" value="UniProtKB"/>
</dbReference>
<dbReference type="GO" id="GO:0007042">
    <property type="term" value="P:lysosomal lumen acidification"/>
    <property type="evidence" value="ECO:0000315"/>
    <property type="project" value="UniProtKB"/>
</dbReference>
<dbReference type="GO" id="GO:0031579">
    <property type="term" value="P:membrane raft organization"/>
    <property type="evidence" value="ECO:0000315"/>
    <property type="project" value="UniProtKB"/>
</dbReference>
<dbReference type="GO" id="GO:0043066">
    <property type="term" value="P:negative regulation of apoptotic process"/>
    <property type="evidence" value="ECO:0000314"/>
    <property type="project" value="UniProtKB"/>
</dbReference>
<dbReference type="GO" id="GO:0030308">
    <property type="term" value="P:negative regulation of cell growth"/>
    <property type="evidence" value="ECO:0000315"/>
    <property type="project" value="UniProtKB"/>
</dbReference>
<dbReference type="GO" id="GO:0043524">
    <property type="term" value="P:negative regulation of neuron apoptotic process"/>
    <property type="evidence" value="ECO:0000315"/>
    <property type="project" value="UniProtKB"/>
</dbReference>
<dbReference type="GO" id="GO:0034164">
    <property type="term" value="P:negative regulation of toll-like receptor 9 signaling pathway"/>
    <property type="evidence" value="ECO:0000314"/>
    <property type="project" value="UniProt"/>
</dbReference>
<dbReference type="GO" id="GO:0007399">
    <property type="term" value="P:nervous system development"/>
    <property type="evidence" value="ECO:0000315"/>
    <property type="project" value="UniProtKB"/>
</dbReference>
<dbReference type="GO" id="GO:0048666">
    <property type="term" value="P:neuron development"/>
    <property type="evidence" value="ECO:0000304"/>
    <property type="project" value="UniProtKB"/>
</dbReference>
<dbReference type="GO" id="GO:0007269">
    <property type="term" value="P:neurotransmitter secretion"/>
    <property type="evidence" value="ECO:0007669"/>
    <property type="project" value="Ensembl"/>
</dbReference>
<dbReference type="GO" id="GO:0006907">
    <property type="term" value="P:pinocytosis"/>
    <property type="evidence" value="ECO:0000315"/>
    <property type="project" value="MGI"/>
</dbReference>
<dbReference type="GO" id="GO:0048549">
    <property type="term" value="P:positive regulation of pinocytosis"/>
    <property type="evidence" value="ECO:0000315"/>
    <property type="project" value="UniProtKB"/>
</dbReference>
<dbReference type="GO" id="GO:0048260">
    <property type="term" value="P:positive regulation of receptor-mediated endocytosis"/>
    <property type="evidence" value="ECO:0000315"/>
    <property type="project" value="UniProtKB"/>
</dbReference>
<dbReference type="GO" id="GO:0030163">
    <property type="term" value="P:protein catabolic process"/>
    <property type="evidence" value="ECO:0000303"/>
    <property type="project" value="UniProtKB"/>
</dbReference>
<dbReference type="GO" id="GO:0002084">
    <property type="term" value="P:protein depalmitoylation"/>
    <property type="evidence" value="ECO:0000314"/>
    <property type="project" value="UniProtKB"/>
</dbReference>
<dbReference type="GO" id="GO:0015031">
    <property type="term" value="P:protein transport"/>
    <property type="evidence" value="ECO:0000315"/>
    <property type="project" value="UniProtKB"/>
</dbReference>
<dbReference type="GO" id="GO:0006898">
    <property type="term" value="P:receptor-mediated endocytosis"/>
    <property type="evidence" value="ECO:0000315"/>
    <property type="project" value="MGI"/>
</dbReference>
<dbReference type="GO" id="GO:0050803">
    <property type="term" value="P:regulation of synapse structure or activity"/>
    <property type="evidence" value="ECO:0000303"/>
    <property type="project" value="UniProtKB"/>
</dbReference>
<dbReference type="GO" id="GO:0030149">
    <property type="term" value="P:sphingolipid catabolic process"/>
    <property type="evidence" value="ECO:0000304"/>
    <property type="project" value="UniProtKB"/>
</dbReference>
<dbReference type="GO" id="GO:0007601">
    <property type="term" value="P:visual perception"/>
    <property type="evidence" value="ECO:0007669"/>
    <property type="project" value="UniProtKB-KW"/>
</dbReference>
<dbReference type="FunFam" id="3.40.50.1820:FF:000098">
    <property type="entry name" value="palmitoyl-protein thioesterase 1"/>
    <property type="match status" value="1"/>
</dbReference>
<dbReference type="Gene3D" id="3.40.50.1820">
    <property type="entry name" value="alpha/beta hydrolase"/>
    <property type="match status" value="1"/>
</dbReference>
<dbReference type="InterPro" id="IPR029058">
    <property type="entry name" value="AB_hydrolase_fold"/>
</dbReference>
<dbReference type="InterPro" id="IPR002472">
    <property type="entry name" value="Palm_thioest"/>
</dbReference>
<dbReference type="PANTHER" id="PTHR11247:SF8">
    <property type="entry name" value="PALMITOYL-PROTEIN THIOESTERASE 1"/>
    <property type="match status" value="1"/>
</dbReference>
<dbReference type="PANTHER" id="PTHR11247">
    <property type="entry name" value="PALMITOYL-PROTEIN THIOESTERASE/DOLICHYLDIPHOSPHATASE 1"/>
    <property type="match status" value="1"/>
</dbReference>
<dbReference type="Pfam" id="PF02089">
    <property type="entry name" value="Palm_thioest"/>
    <property type="match status" value="1"/>
</dbReference>
<dbReference type="PRINTS" id="PR00414">
    <property type="entry name" value="PPTHIESTRASE"/>
</dbReference>
<dbReference type="SUPFAM" id="SSF53474">
    <property type="entry name" value="alpha/beta-Hydrolases"/>
    <property type="match status" value="1"/>
</dbReference>
<name>PPT1_HUMAN</name>
<organism>
    <name type="scientific">Homo sapiens</name>
    <name type="common">Human</name>
    <dbReference type="NCBI Taxonomy" id="9606"/>
    <lineage>
        <taxon>Eukaryota</taxon>
        <taxon>Metazoa</taxon>
        <taxon>Chordata</taxon>
        <taxon>Craniata</taxon>
        <taxon>Vertebrata</taxon>
        <taxon>Euteleostomi</taxon>
        <taxon>Mammalia</taxon>
        <taxon>Eutheria</taxon>
        <taxon>Euarchontoglires</taxon>
        <taxon>Primates</taxon>
        <taxon>Haplorrhini</taxon>
        <taxon>Catarrhini</taxon>
        <taxon>Hominidae</taxon>
        <taxon>Homo</taxon>
    </lineage>
</organism>
<accession>P50897</accession>
<accession>B4DY24</accession>
<accession>Q6FGQ4</accession>
<proteinExistence type="evidence at protein level"/>
<comment type="function">
    <text evidence="7 12 14">Has thioesterase activity against fatty acid thioesters with 14 -18 carbons, including palmitoyl-CoA, S-palmitoyl-N-acetylcysteamine, and palmitoylated proteins (PubMed:12855696, PubMed:26731412, PubMed:8816748). In contrast to PPT2, PPT1 can hydrolyze palmitoylated proteins and palmitoylcysteine (PubMed:12855696).</text>
</comment>
<comment type="catalytic activity">
    <reaction evidence="4 7">
        <text>S-hexadecanoyl-L-cysteinyl-[protein] + H2O = L-cysteinyl-[protein] + hexadecanoate + H(+)</text>
        <dbReference type="Rhea" id="RHEA:19233"/>
        <dbReference type="Rhea" id="RHEA-COMP:10131"/>
        <dbReference type="Rhea" id="RHEA-COMP:11032"/>
        <dbReference type="ChEBI" id="CHEBI:7896"/>
        <dbReference type="ChEBI" id="CHEBI:15377"/>
        <dbReference type="ChEBI" id="CHEBI:15378"/>
        <dbReference type="ChEBI" id="CHEBI:29950"/>
        <dbReference type="ChEBI" id="CHEBI:74151"/>
        <dbReference type="EC" id="3.1.2.22"/>
    </reaction>
</comment>
<comment type="catalytic activity">
    <reaction evidence="7">
        <text>hexadecanoyl-CoA + H2O = hexadecanoate + CoA + H(+)</text>
        <dbReference type="Rhea" id="RHEA:16645"/>
        <dbReference type="ChEBI" id="CHEBI:7896"/>
        <dbReference type="ChEBI" id="CHEBI:15377"/>
        <dbReference type="ChEBI" id="CHEBI:15378"/>
        <dbReference type="ChEBI" id="CHEBI:57287"/>
        <dbReference type="ChEBI" id="CHEBI:57379"/>
        <dbReference type="EC" id="3.1.2.2"/>
    </reaction>
    <physiologicalReaction direction="left-to-right" evidence="21">
        <dbReference type="Rhea" id="RHEA:16646"/>
    </physiologicalReaction>
</comment>
<comment type="catalytic activity">
    <reaction evidence="7">
        <text>S-hexadecanoyl-N-acetylcysteamine + H2O = N-acetylcysteamine + hexadecanoate + H(+)</text>
        <dbReference type="Rhea" id="RHEA:84099"/>
        <dbReference type="ChEBI" id="CHEBI:7896"/>
        <dbReference type="ChEBI" id="CHEBI:15377"/>
        <dbReference type="ChEBI" id="CHEBI:15378"/>
        <dbReference type="ChEBI" id="CHEBI:74410"/>
        <dbReference type="ChEBI" id="CHEBI:233601"/>
    </reaction>
</comment>
<comment type="catalytic activity">
    <reaction evidence="7">
        <text>S-hexadecanoyl-N-acetylcysteine methyl ester + H2O = N-acetylcysteine methyl ester + hexadecanoate + H(+)</text>
        <dbReference type="Rhea" id="RHEA:84103"/>
        <dbReference type="ChEBI" id="CHEBI:7896"/>
        <dbReference type="ChEBI" id="CHEBI:15377"/>
        <dbReference type="ChEBI" id="CHEBI:15378"/>
        <dbReference type="ChEBI" id="CHEBI:233604"/>
        <dbReference type="ChEBI" id="CHEBI:233605"/>
    </reaction>
</comment>
<comment type="activity regulation">
    <text evidence="12">Palmitoylation reduces PPT1 enzymatic activity.</text>
</comment>
<comment type="biophysicochemical properties">
    <kinetics>
        <KM evidence="7">14 uM for S-palmitoyl H-Ras</KM>
        <KM evidence="7">48 uM for S-palmitoyl-N-acetyl-0-carboxymethyl-cysteine</KM>
        <KM evidence="7">51 uM for S-palmitoyl-CoA</KM>
        <KM evidence="7">34 uM for S-palmitoyl-N-acetylcysteamine</KM>
        <KM evidence="7">130 uM for 4-methylumbelliferyl-6-S-palmitoyl-beta-D-glucopyranoside</KM>
        <Vmax evidence="7">0.18 umol/min/mg enzyme toward S-palmitoyl H-Ras</Vmax>
        <Vmax evidence="7">2.5 umol/min/mg enzyme toward S-palmitoyl-N-acetyl-0-carboxymethyl-cysteine</Vmax>
        <Vmax evidence="7">0.72 umol/min/mg enzyme toward S-palmitoyl-CoA</Vmax>
        <Vmax evidence="7">3.2 umol/min/mg enzyme toward S-palmitoyl-N-acetylcysteamine</Vmax>
        <Vmax evidence="7">10.8 umol/min/mg enzyme toward 4-methylumbelliferyl-6-S-palmitoyl-beta-D-glucopyranoside</Vmax>
    </kinetics>
    <phDependence>
        <text evidence="4">Optimum pH is 7.4.</text>
    </phDependence>
</comment>
<comment type="subunit">
    <text evidence="1 10">Interacts with CLN5 (PubMed:19941651). Interacts with ATP5F1A and ATP5F1B (By similarity).</text>
</comment>
<comment type="interaction">
    <interactant intactId="EBI-1237011">
        <id>P50897</id>
    </interactant>
    <interactant intactId="EBI-25884472">
        <id>P26436</id>
        <label>ACRV1</label>
    </interactant>
    <organismsDiffer>false</organismsDiffer>
    <experiments>3</experiments>
</comment>
<comment type="interaction">
    <interactant intactId="EBI-1237011">
        <id>P50897</id>
    </interactant>
    <interactant intactId="EBI-14199987">
        <id>Q9Y575-3</id>
        <label>ASB3</label>
    </interactant>
    <organismsDiffer>false</organismsDiffer>
    <experiments>3</experiments>
</comment>
<comment type="interaction">
    <interactant intactId="EBI-1237011">
        <id>P50897</id>
    </interactant>
    <interactant intactId="EBI-2410266">
        <id>Q8WXF7</id>
        <label>ATL1</label>
    </interactant>
    <organismsDiffer>false</organismsDiffer>
    <experiments>3</experiments>
</comment>
<comment type="interaction">
    <interactant intactId="EBI-1237011">
        <id>P50897</id>
    </interactant>
    <interactant intactId="EBI-629434">
        <id>O75925</id>
        <label>PIAS1</label>
    </interactant>
    <organismsDiffer>false</organismsDiffer>
    <experiments>3</experiments>
</comment>
<comment type="interaction">
    <interactant intactId="EBI-1237011">
        <id>P50897</id>
    </interactant>
    <interactant intactId="EBI-12891828">
        <id>Q6ZR37</id>
        <label>PLEKHG7</label>
    </interactant>
    <organismsDiffer>false</organismsDiffer>
    <experiments>3</experiments>
</comment>
<comment type="interaction">
    <interactant intactId="EBI-1237011">
        <id>P50897</id>
    </interactant>
    <interactant intactId="EBI-11959123">
        <id>Q99932-2</id>
        <label>SPAG8</label>
    </interactant>
    <organismsDiffer>false</organismsDiffer>
    <experiments>3</experiments>
</comment>
<comment type="interaction">
    <interactant intactId="EBI-1237011">
        <id>P50897</id>
    </interactant>
    <interactant intactId="EBI-18036029">
        <id>Q3KNS6-3</id>
        <label>ZNF829</label>
    </interactant>
    <organismsDiffer>false</organismsDiffer>
    <experiments>3</experiments>
</comment>
<comment type="interaction">
    <interactant intactId="EBI-1237011">
        <id>P50897</id>
    </interactant>
    <interactant intactId="EBI-14033513">
        <id>Q76RH3</id>
        <label>ORF38</label>
    </interactant>
    <organismsDiffer>true</organismsDiffer>
    <experiments>2</experiments>
</comment>
<comment type="subcellular location">
    <subcellularLocation>
        <location evidence="10 12">Lysosome</location>
    </subcellularLocation>
    <subcellularLocation>
        <location evidence="12">Secreted</location>
    </subcellularLocation>
    <subcellularLocation>
        <location evidence="12">Golgi apparatus</location>
    </subcellularLocation>
    <subcellularLocation>
        <location evidence="12">Endoplasmic reticulum</location>
    </subcellularLocation>
</comment>
<comment type="alternative products">
    <event type="alternative splicing"/>
    <isoform>
        <id>P50897-1</id>
        <name>1</name>
        <sequence type="displayed"/>
    </isoform>
    <isoform>
        <id>P50897-2</id>
        <name>2</name>
        <sequence type="described" ref="VSP_042033"/>
    </isoform>
</comment>
<comment type="PTM">
    <text evidence="2">Glycosylated.</text>
</comment>
<comment type="disease" evidence="3 5 9 10 11 13 15 16">
    <disease id="DI-00810">
        <name>Ceroid lipofuscinosis, neuronal, 1</name>
        <acronym>CLN1</acronym>
        <description>A form of neuronal ceroid lipofuscinosis with variable age at onset. Infantile, late-infantile, juvenile, and adult onset have been reported. Neuronal ceroid lipofuscinoses are progressive neurodegenerative, lysosomal storage diseases characterized by intracellular accumulation of autofluorescent liposomal material, and clinically by seizures, dementia, visual loss, and/or cerebral atrophy. The lipopigment pattern seen most often in CLN1 is referred to as granular osmiophilic deposits (GROD).</description>
        <dbReference type="MIM" id="256730"/>
    </disease>
    <text>The disease is caused by variants affecting the gene represented in this entry.</text>
</comment>
<comment type="similarity">
    <text evidence="20">Belongs to the palmitoyl-protein thioesterase family.</text>
</comment>
<comment type="online information" name="NCL CLN1">
    <link uri="https://www.ucl.ac.uk/ncl-disease/ncl-resource-gateway-batten-disease"/>
    <text>Neural Ceroid Lipofuscinoses mutation db</text>
</comment>